<accession>Q40401</accession>
<organism>
    <name type="scientific">Nicotiana plumbaginifolia</name>
    <name type="common">Leadwort-leaved tobacco</name>
    <name type="synonym">Tex-Mex tobacco</name>
    <dbReference type="NCBI Taxonomy" id="4092"/>
    <lineage>
        <taxon>Eukaryota</taxon>
        <taxon>Viridiplantae</taxon>
        <taxon>Streptophyta</taxon>
        <taxon>Embryophyta</taxon>
        <taxon>Tracheophyta</taxon>
        <taxon>Spermatophyta</taxon>
        <taxon>Magnoliopsida</taxon>
        <taxon>eudicotyledons</taxon>
        <taxon>Gunneridae</taxon>
        <taxon>Pentapetalae</taxon>
        <taxon>asterids</taxon>
        <taxon>lamiids</taxon>
        <taxon>Solanales</taxon>
        <taxon>Solanaceae</taxon>
        <taxon>Nicotianoideae</taxon>
        <taxon>Nicotianeae</taxon>
        <taxon>Nicotiana</taxon>
    </lineage>
</organism>
<gene>
    <name type="primary">CAL1</name>
</gene>
<proteinExistence type="evidence at transcript level"/>
<keyword id="KW-0106">Calcium</keyword>
<keyword id="KW-0143">Chaperone</keyword>
<keyword id="KW-1015">Disulfide bond</keyword>
<keyword id="KW-0256">Endoplasmic reticulum</keyword>
<keyword id="KW-0325">Glycoprotein</keyword>
<keyword id="KW-0430">Lectin</keyword>
<keyword id="KW-0479">Metal-binding</keyword>
<keyword id="KW-0677">Repeat</keyword>
<keyword id="KW-0732">Signal</keyword>
<keyword id="KW-0862">Zinc</keyword>
<sequence>MATQRRANPSSLHLITVFSLLVAVVSAEVFFEESFNDGWESRWVKSEWKKDENMAGEWNHTSGKWNGDANDKGIQTSEDYRFYAISAEFPEFSNKGKNLVFQFSVKHEQKLDCGGGYMKLLSGDVDQKKFGGDTPYSIMFGPDICGYSTKKVHAILTYNDTNHLIKKEVPCETDQLTHVYTFILRPDATYSILIDNVEKQSGSLYSDWDLLPPKTIKDPSAKKPEDWDEKEFIDDPEDKKPEGYDDIPEEITDPDAKKPEDWDDEEDGEWTAPTIPNPEYKGPWKPKKIKNPNYKGKWKAPLIDNPDFKDDPDLYVFPKLKYVGVELWQVKSGTLFDNIVICDDPEYAKAIAEETWGKQKDAEKAAFEEAEKKREEEESKAAPADSDAEEDDDADDDSDDADDKSESKDDEAHDEL</sequence>
<reference key="1">
    <citation type="journal article" date="1998" name="Planta">
        <title>Calreticulin expression in plant cells: developmental regulation, tissue specificity and intracellular distribution.</title>
        <authorList>
            <person name="Borisjuk N."/>
            <person name="Sitailo L."/>
            <person name="Adler K."/>
            <person name="Malysheva L."/>
            <person name="Tewes A."/>
            <person name="Borisjuk L."/>
            <person name="Manteuffel R."/>
        </authorList>
    </citation>
    <scope>NUCLEOTIDE SEQUENCE [MRNA]</scope>
</reference>
<evidence type="ECO:0000250" key="1"/>
<evidence type="ECO:0000250" key="2">
    <source>
        <dbReference type="UniProtKB" id="P14211"/>
    </source>
</evidence>
<evidence type="ECO:0000255" key="3"/>
<evidence type="ECO:0000255" key="4">
    <source>
        <dbReference type="PROSITE-ProRule" id="PRU10138"/>
    </source>
</evidence>
<evidence type="ECO:0000256" key="5">
    <source>
        <dbReference type="SAM" id="MobiDB-lite"/>
    </source>
</evidence>
<evidence type="ECO:0000305" key="6"/>
<name>CALR_NICPL</name>
<protein>
    <recommendedName>
        <fullName>Calreticulin</fullName>
    </recommendedName>
</protein>
<dbReference type="EMBL" id="Z71395">
    <property type="protein sequence ID" value="CAA95999.1"/>
    <property type="molecule type" value="mRNA"/>
</dbReference>
<dbReference type="PIR" id="T16968">
    <property type="entry name" value="T16968"/>
</dbReference>
<dbReference type="SMR" id="Q40401"/>
<dbReference type="GlyCosmos" id="Q40401">
    <property type="glycosylation" value="2 sites, No reported glycans"/>
</dbReference>
<dbReference type="GO" id="GO:0005788">
    <property type="term" value="C:endoplasmic reticulum lumen"/>
    <property type="evidence" value="ECO:0007669"/>
    <property type="project" value="UniProtKB-SubCell"/>
</dbReference>
<dbReference type="GO" id="GO:0005789">
    <property type="term" value="C:endoplasmic reticulum membrane"/>
    <property type="evidence" value="ECO:0007669"/>
    <property type="project" value="TreeGrafter"/>
</dbReference>
<dbReference type="GO" id="GO:0005509">
    <property type="term" value="F:calcium ion binding"/>
    <property type="evidence" value="ECO:0007669"/>
    <property type="project" value="InterPro"/>
</dbReference>
<dbReference type="GO" id="GO:0030246">
    <property type="term" value="F:carbohydrate binding"/>
    <property type="evidence" value="ECO:0007669"/>
    <property type="project" value="UniProtKB-KW"/>
</dbReference>
<dbReference type="GO" id="GO:0051082">
    <property type="term" value="F:unfolded protein binding"/>
    <property type="evidence" value="ECO:0007669"/>
    <property type="project" value="InterPro"/>
</dbReference>
<dbReference type="GO" id="GO:0036503">
    <property type="term" value="P:ERAD pathway"/>
    <property type="evidence" value="ECO:0007669"/>
    <property type="project" value="TreeGrafter"/>
</dbReference>
<dbReference type="GO" id="GO:0006457">
    <property type="term" value="P:protein folding"/>
    <property type="evidence" value="ECO:0007669"/>
    <property type="project" value="InterPro"/>
</dbReference>
<dbReference type="FunFam" id="2.10.250.10:FF:000002">
    <property type="entry name" value="Calreticulin"/>
    <property type="match status" value="1"/>
</dbReference>
<dbReference type="FunFam" id="2.60.120.200:FF:000018">
    <property type="entry name" value="Calreticulin 1b"/>
    <property type="match status" value="1"/>
</dbReference>
<dbReference type="Gene3D" id="2.60.120.200">
    <property type="match status" value="1"/>
</dbReference>
<dbReference type="Gene3D" id="2.10.250.10">
    <property type="entry name" value="Calreticulin/calnexin, P domain"/>
    <property type="match status" value="1"/>
</dbReference>
<dbReference type="InterPro" id="IPR001580">
    <property type="entry name" value="Calret/calnex"/>
</dbReference>
<dbReference type="InterPro" id="IPR018124">
    <property type="entry name" value="Calret/calnex_CS"/>
</dbReference>
<dbReference type="InterPro" id="IPR009169">
    <property type="entry name" value="Calreticulin"/>
</dbReference>
<dbReference type="InterPro" id="IPR009033">
    <property type="entry name" value="Calreticulin/calnexin_P_dom_sf"/>
</dbReference>
<dbReference type="InterPro" id="IPR013320">
    <property type="entry name" value="ConA-like_dom_sf"/>
</dbReference>
<dbReference type="PANTHER" id="PTHR11073:SF2">
    <property type="entry name" value="CALRETICULIN"/>
    <property type="match status" value="1"/>
</dbReference>
<dbReference type="PANTHER" id="PTHR11073">
    <property type="entry name" value="CALRETICULIN AND CALNEXIN"/>
    <property type="match status" value="1"/>
</dbReference>
<dbReference type="Pfam" id="PF00262">
    <property type="entry name" value="Calreticulin"/>
    <property type="match status" value="2"/>
</dbReference>
<dbReference type="PIRSF" id="PIRSF002356">
    <property type="entry name" value="Calreticulin"/>
    <property type="match status" value="1"/>
</dbReference>
<dbReference type="PRINTS" id="PR00626">
    <property type="entry name" value="CALRETICULIN"/>
</dbReference>
<dbReference type="SUPFAM" id="SSF49899">
    <property type="entry name" value="Concanavalin A-like lectins/glucanases"/>
    <property type="match status" value="1"/>
</dbReference>
<dbReference type="SUPFAM" id="SSF63887">
    <property type="entry name" value="P-domain of calnexin/calreticulin"/>
    <property type="match status" value="1"/>
</dbReference>
<dbReference type="PROSITE" id="PS00803">
    <property type="entry name" value="CALRETICULIN_1"/>
    <property type="match status" value="1"/>
</dbReference>
<dbReference type="PROSITE" id="PS00804">
    <property type="entry name" value="CALRETICULIN_2"/>
    <property type="match status" value="1"/>
</dbReference>
<dbReference type="PROSITE" id="PS00805">
    <property type="entry name" value="CALRETICULIN_REPEAT"/>
    <property type="match status" value="2"/>
</dbReference>
<dbReference type="PROSITE" id="PS00014">
    <property type="entry name" value="ER_TARGET"/>
    <property type="match status" value="1"/>
</dbReference>
<comment type="function">
    <text evidence="1">Molecular calcium-binding chaperone promoting folding, oligomeric assembly and quality control in the ER via the calreticulin/calnexin cycle. This lectin may interact transiently with almost all of the monoglucosylated glycoproteins that are synthesized in the ER (By similarity).</text>
</comment>
<comment type="subcellular location">
    <subcellularLocation>
        <location evidence="4">Endoplasmic reticulum lumen</location>
    </subcellularLocation>
</comment>
<comment type="domain">
    <text evidence="1">Can be divided into a N-terminal globular domain, a proline-rich P-domain forming an elongated arm-like structure and a C-terminal acidic domain. The P-domain binds one molecule of calcium with high affinity, whereas the acidic C-domain binds multiple calcium ions with low affinity (By similarity).</text>
</comment>
<comment type="domain">
    <text evidence="1">The interaction with glycans occurs through a binding site in the globular lectin domain.</text>
</comment>
<comment type="domain">
    <text evidence="1">The zinc binding sites are localized to the N-domain.</text>
</comment>
<comment type="similarity">
    <text evidence="6">Belongs to the calreticulin family.</text>
</comment>
<feature type="signal peptide" evidence="3">
    <location>
        <begin position="1"/>
        <end position="27"/>
    </location>
</feature>
<feature type="chain" id="PRO_0000004192" description="Calreticulin">
    <location>
        <begin position="28"/>
        <end position="416"/>
    </location>
</feature>
<feature type="repeat" description="1-1">
    <location>
        <begin position="199"/>
        <end position="210"/>
    </location>
</feature>
<feature type="repeat" description="1-2">
    <location>
        <begin position="218"/>
        <end position="229"/>
    </location>
</feature>
<feature type="repeat" description="1-3">
    <location>
        <begin position="235"/>
        <end position="246"/>
    </location>
</feature>
<feature type="repeat" description="1-4">
    <location>
        <begin position="253"/>
        <end position="264"/>
    </location>
</feature>
<feature type="repeat" description="2-1">
    <location>
        <begin position="268"/>
        <end position="278"/>
    </location>
</feature>
<feature type="repeat" description="2-2">
    <location>
        <begin position="282"/>
        <end position="292"/>
    </location>
</feature>
<feature type="repeat" description="2-3">
    <location>
        <begin position="296"/>
        <end position="306"/>
    </location>
</feature>
<feature type="region of interest" description="4 X approximate repeats">
    <location>
        <begin position="199"/>
        <end position="264"/>
    </location>
</feature>
<feature type="region of interest" description="Disordered" evidence="5">
    <location>
        <begin position="215"/>
        <end position="286"/>
    </location>
</feature>
<feature type="region of interest" description="3 X approximate repeats">
    <location>
        <begin position="268"/>
        <end position="306"/>
    </location>
</feature>
<feature type="region of interest" description="Disordered" evidence="5">
    <location>
        <begin position="355"/>
        <end position="416"/>
    </location>
</feature>
<feature type="short sequence motif" description="Prevents secretion from ER" evidence="4">
    <location>
        <begin position="413"/>
        <end position="416"/>
    </location>
</feature>
<feature type="compositionally biased region" description="Basic and acidic residues" evidence="5">
    <location>
        <begin position="215"/>
        <end position="225"/>
    </location>
</feature>
<feature type="compositionally biased region" description="Acidic residues" evidence="5">
    <location>
        <begin position="226"/>
        <end position="236"/>
    </location>
</feature>
<feature type="compositionally biased region" description="Acidic residues" evidence="5">
    <location>
        <begin position="244"/>
        <end position="253"/>
    </location>
</feature>
<feature type="compositionally biased region" description="Basic and acidic residues" evidence="5">
    <location>
        <begin position="355"/>
        <end position="380"/>
    </location>
</feature>
<feature type="compositionally biased region" description="Acidic residues" evidence="5">
    <location>
        <begin position="386"/>
        <end position="403"/>
    </location>
</feature>
<feature type="compositionally biased region" description="Basic and acidic residues" evidence="5">
    <location>
        <begin position="404"/>
        <end position="416"/>
    </location>
</feature>
<feature type="binding site" evidence="2">
    <location>
        <position position="117"/>
    </location>
    <ligand>
        <name>an alpha-D-glucoside</name>
        <dbReference type="ChEBI" id="CHEBI:22390"/>
    </ligand>
</feature>
<feature type="binding site" evidence="2">
    <location>
        <position position="119"/>
    </location>
    <ligand>
        <name>an alpha-D-glucoside</name>
        <dbReference type="ChEBI" id="CHEBI:22390"/>
    </ligand>
</feature>
<feature type="binding site" evidence="2">
    <location>
        <position position="136"/>
    </location>
    <ligand>
        <name>an alpha-D-glucoside</name>
        <dbReference type="ChEBI" id="CHEBI:22390"/>
    </ligand>
</feature>
<feature type="binding site" evidence="2">
    <location>
        <position position="143"/>
    </location>
    <ligand>
        <name>an alpha-D-glucoside</name>
        <dbReference type="ChEBI" id="CHEBI:22390"/>
    </ligand>
</feature>
<feature type="binding site" evidence="2">
    <location>
        <position position="326"/>
    </location>
    <ligand>
        <name>an alpha-D-glucoside</name>
        <dbReference type="ChEBI" id="CHEBI:22390"/>
    </ligand>
</feature>
<feature type="glycosylation site" description="N-linked (GlcNAc...) asparagine" evidence="3">
    <location>
        <position position="59"/>
    </location>
</feature>
<feature type="glycosylation site" description="N-linked (GlcNAc...) asparagine" evidence="3">
    <location>
        <position position="159"/>
    </location>
</feature>
<feature type="disulfide bond" evidence="1">
    <location>
        <begin position="113"/>
        <end position="145"/>
    </location>
</feature>